<keyword id="KW-0328">Glycosyltransferase</keyword>
<keyword id="KW-0460">Magnesium</keyword>
<keyword id="KW-0665">Pyrimidine biosynthesis</keyword>
<keyword id="KW-0808">Transferase</keyword>
<reference key="1">
    <citation type="journal article" date="2005" name="Proc. Natl. Acad. Sci. U.S.A.">
        <title>Comparison of the complete genome sequences of Pseudomonas syringae pv. syringae B728a and pv. tomato DC3000.</title>
        <authorList>
            <person name="Feil H."/>
            <person name="Feil W.S."/>
            <person name="Chain P."/>
            <person name="Larimer F."/>
            <person name="Dibartolo G."/>
            <person name="Copeland A."/>
            <person name="Lykidis A."/>
            <person name="Trong S."/>
            <person name="Nolan M."/>
            <person name="Goltsman E."/>
            <person name="Thiel J."/>
            <person name="Malfatti S."/>
            <person name="Loper J.E."/>
            <person name="Lapidus A."/>
            <person name="Detter J.C."/>
            <person name="Land M."/>
            <person name="Richardson P.M."/>
            <person name="Kyrpides N.C."/>
            <person name="Ivanova N."/>
            <person name="Lindow S.E."/>
        </authorList>
    </citation>
    <scope>NUCLEOTIDE SEQUENCE [LARGE SCALE GENOMIC DNA]</scope>
    <source>
        <strain>B728a</strain>
    </source>
</reference>
<proteinExistence type="inferred from homology"/>
<sequence>MQAYQRDFIRFAIDRGVLRFGEFTLKSGRTSPYFFNAGLFNTGSALAQLGRFYAAAVVESGIAFDVLFGPAYKGIPLASATAVALAEHHDRDLPWCFNRKEAKAHGEGGSLVGSPLAGNVLIIDDVITAGTAIREVMQIIKDQDATAAGVLIALNRQERGNGELSAIQEVERDFGIPVVSIVSLNQVLEFLADDPQLKQHLPAVEAYRAQFGI</sequence>
<accession>Q4ZZY3</accession>
<organism>
    <name type="scientific">Pseudomonas syringae pv. syringae (strain B728a)</name>
    <dbReference type="NCBI Taxonomy" id="205918"/>
    <lineage>
        <taxon>Bacteria</taxon>
        <taxon>Pseudomonadati</taxon>
        <taxon>Pseudomonadota</taxon>
        <taxon>Gammaproteobacteria</taxon>
        <taxon>Pseudomonadales</taxon>
        <taxon>Pseudomonadaceae</taxon>
        <taxon>Pseudomonas</taxon>
        <taxon>Pseudomonas syringae</taxon>
    </lineage>
</organism>
<comment type="function">
    <text evidence="1">Catalyzes the transfer of a ribosyl phosphate group from 5-phosphoribose 1-diphosphate to orotate, leading to the formation of orotidine monophosphate (OMP).</text>
</comment>
<comment type="catalytic activity">
    <reaction evidence="1">
        <text>orotidine 5'-phosphate + diphosphate = orotate + 5-phospho-alpha-D-ribose 1-diphosphate</text>
        <dbReference type="Rhea" id="RHEA:10380"/>
        <dbReference type="ChEBI" id="CHEBI:30839"/>
        <dbReference type="ChEBI" id="CHEBI:33019"/>
        <dbReference type="ChEBI" id="CHEBI:57538"/>
        <dbReference type="ChEBI" id="CHEBI:58017"/>
        <dbReference type="EC" id="2.4.2.10"/>
    </reaction>
</comment>
<comment type="cofactor">
    <cofactor evidence="1">
        <name>Mg(2+)</name>
        <dbReference type="ChEBI" id="CHEBI:18420"/>
    </cofactor>
</comment>
<comment type="pathway">
    <text evidence="1">Pyrimidine metabolism; UMP biosynthesis via de novo pathway; UMP from orotate: step 1/2.</text>
</comment>
<comment type="subunit">
    <text evidence="1">Homodimer.</text>
</comment>
<comment type="similarity">
    <text evidence="1">Belongs to the purine/pyrimidine phosphoribosyltransferase family. PyrE subfamily.</text>
</comment>
<gene>
    <name evidence="1" type="primary">pyrE</name>
    <name type="ordered locus">Psyr_0216</name>
</gene>
<evidence type="ECO:0000255" key="1">
    <source>
        <dbReference type="HAMAP-Rule" id="MF_01208"/>
    </source>
</evidence>
<protein>
    <recommendedName>
        <fullName evidence="1">Orotate phosphoribosyltransferase</fullName>
        <shortName evidence="1">OPRT</shortName>
        <shortName evidence="1">OPRTase</shortName>
        <ecNumber evidence="1">2.4.2.10</ecNumber>
    </recommendedName>
</protein>
<name>PYRE_PSEU2</name>
<feature type="chain" id="PRO_1000066278" description="Orotate phosphoribosyltransferase">
    <location>
        <begin position="1"/>
        <end position="213"/>
    </location>
</feature>
<feature type="binding site" description="in other chain" evidence="1">
    <location>
        <position position="26"/>
    </location>
    <ligand>
        <name>5-phospho-alpha-D-ribose 1-diphosphate</name>
        <dbReference type="ChEBI" id="CHEBI:58017"/>
        <note>ligand shared between dimeric partners</note>
    </ligand>
</feature>
<feature type="binding site" evidence="1">
    <location>
        <begin position="34"/>
        <end position="35"/>
    </location>
    <ligand>
        <name>orotate</name>
        <dbReference type="ChEBI" id="CHEBI:30839"/>
    </ligand>
</feature>
<feature type="binding site" description="in other chain" evidence="1">
    <location>
        <begin position="72"/>
        <end position="73"/>
    </location>
    <ligand>
        <name>5-phospho-alpha-D-ribose 1-diphosphate</name>
        <dbReference type="ChEBI" id="CHEBI:58017"/>
        <note>ligand shared between dimeric partners</note>
    </ligand>
</feature>
<feature type="binding site" evidence="1">
    <location>
        <position position="99"/>
    </location>
    <ligand>
        <name>5-phospho-alpha-D-ribose 1-diphosphate</name>
        <dbReference type="ChEBI" id="CHEBI:58017"/>
        <note>ligand shared between dimeric partners</note>
    </ligand>
</feature>
<feature type="binding site" description="in other chain" evidence="1">
    <location>
        <position position="100"/>
    </location>
    <ligand>
        <name>5-phospho-alpha-D-ribose 1-diphosphate</name>
        <dbReference type="ChEBI" id="CHEBI:58017"/>
        <note>ligand shared between dimeric partners</note>
    </ligand>
</feature>
<feature type="binding site" evidence="1">
    <location>
        <position position="103"/>
    </location>
    <ligand>
        <name>5-phospho-alpha-D-ribose 1-diphosphate</name>
        <dbReference type="ChEBI" id="CHEBI:58017"/>
        <note>ligand shared between dimeric partners</note>
    </ligand>
</feature>
<feature type="binding site" evidence="1">
    <location>
        <position position="105"/>
    </location>
    <ligand>
        <name>5-phospho-alpha-D-ribose 1-diphosphate</name>
        <dbReference type="ChEBI" id="CHEBI:58017"/>
        <note>ligand shared between dimeric partners</note>
    </ligand>
</feature>
<feature type="binding site" description="in other chain" evidence="1">
    <location>
        <begin position="124"/>
        <end position="132"/>
    </location>
    <ligand>
        <name>5-phospho-alpha-D-ribose 1-diphosphate</name>
        <dbReference type="ChEBI" id="CHEBI:58017"/>
        <note>ligand shared between dimeric partners</note>
    </ligand>
</feature>
<feature type="binding site" evidence="1">
    <location>
        <position position="128"/>
    </location>
    <ligand>
        <name>orotate</name>
        <dbReference type="ChEBI" id="CHEBI:30839"/>
    </ligand>
</feature>
<feature type="binding site" evidence="1">
    <location>
        <position position="156"/>
    </location>
    <ligand>
        <name>orotate</name>
        <dbReference type="ChEBI" id="CHEBI:30839"/>
    </ligand>
</feature>
<dbReference type="EC" id="2.4.2.10" evidence="1"/>
<dbReference type="EMBL" id="CP000075">
    <property type="protein sequence ID" value="AAY35289.1"/>
    <property type="molecule type" value="Genomic_DNA"/>
</dbReference>
<dbReference type="RefSeq" id="WP_003403990.1">
    <property type="nucleotide sequence ID" value="NC_007005.1"/>
</dbReference>
<dbReference type="RefSeq" id="YP_233327.1">
    <property type="nucleotide sequence ID" value="NC_007005.1"/>
</dbReference>
<dbReference type="SMR" id="Q4ZZY3"/>
<dbReference type="STRING" id="205918.Psyr_0216"/>
<dbReference type="KEGG" id="psb:Psyr_0216"/>
<dbReference type="PATRIC" id="fig|205918.7.peg.213"/>
<dbReference type="eggNOG" id="COG0461">
    <property type="taxonomic scope" value="Bacteria"/>
</dbReference>
<dbReference type="HOGENOM" id="CLU_074878_0_1_6"/>
<dbReference type="OrthoDB" id="9779060at2"/>
<dbReference type="UniPathway" id="UPA00070">
    <property type="reaction ID" value="UER00119"/>
</dbReference>
<dbReference type="Proteomes" id="UP000000426">
    <property type="component" value="Chromosome"/>
</dbReference>
<dbReference type="GO" id="GO:0005737">
    <property type="term" value="C:cytoplasm"/>
    <property type="evidence" value="ECO:0007669"/>
    <property type="project" value="TreeGrafter"/>
</dbReference>
<dbReference type="GO" id="GO:0000287">
    <property type="term" value="F:magnesium ion binding"/>
    <property type="evidence" value="ECO:0007669"/>
    <property type="project" value="UniProtKB-UniRule"/>
</dbReference>
<dbReference type="GO" id="GO:0004588">
    <property type="term" value="F:orotate phosphoribosyltransferase activity"/>
    <property type="evidence" value="ECO:0007669"/>
    <property type="project" value="UniProtKB-UniRule"/>
</dbReference>
<dbReference type="GO" id="GO:0006207">
    <property type="term" value="P:'de novo' pyrimidine nucleobase biosynthetic process"/>
    <property type="evidence" value="ECO:0007669"/>
    <property type="project" value="TreeGrafter"/>
</dbReference>
<dbReference type="GO" id="GO:0044205">
    <property type="term" value="P:'de novo' UMP biosynthetic process"/>
    <property type="evidence" value="ECO:0007669"/>
    <property type="project" value="UniProtKB-UniRule"/>
</dbReference>
<dbReference type="GO" id="GO:0046132">
    <property type="term" value="P:pyrimidine ribonucleoside biosynthetic process"/>
    <property type="evidence" value="ECO:0007669"/>
    <property type="project" value="TreeGrafter"/>
</dbReference>
<dbReference type="CDD" id="cd06223">
    <property type="entry name" value="PRTases_typeI"/>
    <property type="match status" value="1"/>
</dbReference>
<dbReference type="FunFam" id="3.40.50.2020:FF:000008">
    <property type="entry name" value="Orotate phosphoribosyltransferase"/>
    <property type="match status" value="1"/>
</dbReference>
<dbReference type="Gene3D" id="3.40.50.2020">
    <property type="match status" value="1"/>
</dbReference>
<dbReference type="HAMAP" id="MF_01208">
    <property type="entry name" value="PyrE"/>
    <property type="match status" value="1"/>
</dbReference>
<dbReference type="InterPro" id="IPR023031">
    <property type="entry name" value="OPRT"/>
</dbReference>
<dbReference type="InterPro" id="IPR004467">
    <property type="entry name" value="Or_phspho_trans_dom"/>
</dbReference>
<dbReference type="InterPro" id="IPR000836">
    <property type="entry name" value="PRibTrfase_dom"/>
</dbReference>
<dbReference type="InterPro" id="IPR029057">
    <property type="entry name" value="PRTase-like"/>
</dbReference>
<dbReference type="NCBIfam" id="TIGR00336">
    <property type="entry name" value="pyrE"/>
    <property type="match status" value="1"/>
</dbReference>
<dbReference type="PANTHER" id="PTHR46683">
    <property type="entry name" value="OROTATE PHOSPHORIBOSYLTRANSFERASE 1-RELATED"/>
    <property type="match status" value="1"/>
</dbReference>
<dbReference type="PANTHER" id="PTHR46683:SF1">
    <property type="entry name" value="OROTATE PHOSPHORIBOSYLTRANSFERASE 1-RELATED"/>
    <property type="match status" value="1"/>
</dbReference>
<dbReference type="Pfam" id="PF00156">
    <property type="entry name" value="Pribosyltran"/>
    <property type="match status" value="1"/>
</dbReference>
<dbReference type="SUPFAM" id="SSF53271">
    <property type="entry name" value="PRTase-like"/>
    <property type="match status" value="1"/>
</dbReference>
<dbReference type="PROSITE" id="PS00103">
    <property type="entry name" value="PUR_PYR_PR_TRANSFER"/>
    <property type="match status" value="1"/>
</dbReference>